<evidence type="ECO:0000250" key="1"/>
<evidence type="ECO:0000250" key="2">
    <source>
        <dbReference type="UniProtKB" id="P09152"/>
    </source>
</evidence>
<evidence type="ECO:0000255" key="3"/>
<evidence type="ECO:0000269" key="4">
    <source ref="1"/>
</evidence>
<evidence type="ECO:0000303" key="5">
    <source ref="1"/>
</evidence>
<feature type="chain" id="PRO_0000283778" description="Respiratory nitrate reductase alpha chain">
    <location>
        <begin position="1"/>
        <end position="902" status="greater than"/>
    </location>
</feature>
<feature type="binding site" evidence="1">
    <location>
        <position position="29"/>
    </location>
    <ligand>
        <name>[4Fe-4S] cluster</name>
        <dbReference type="ChEBI" id="CHEBI:49883"/>
    </ligand>
</feature>
<feature type="binding site" evidence="2">
    <location>
        <position position="33"/>
    </location>
    <ligand>
        <name>[4Fe-4S] cluster</name>
        <dbReference type="ChEBI" id="CHEBI:49883"/>
    </ligand>
</feature>
<feature type="binding site" evidence="2">
    <location>
        <position position="37"/>
    </location>
    <ligand>
        <name>[4Fe-4S] cluster</name>
        <dbReference type="ChEBI" id="CHEBI:49883"/>
    </ligand>
</feature>
<feature type="non-consecutive residues" evidence="5">
    <location>
        <begin position="6"/>
        <end position="7"/>
    </location>
</feature>
<feature type="non-consecutive residues" evidence="5">
    <location>
        <begin position="26"/>
        <end position="27"/>
    </location>
</feature>
<feature type="non-consecutive residues" evidence="5">
    <location>
        <begin position="40"/>
        <end position="41"/>
    </location>
</feature>
<feature type="non-consecutive residues" evidence="5">
    <location>
        <begin position="66"/>
        <end position="67"/>
    </location>
</feature>
<feature type="non-consecutive residues" evidence="5">
    <location>
        <begin position="79"/>
        <end position="80"/>
    </location>
</feature>
<feature type="non-consecutive residues" evidence="5">
    <location>
        <begin position="101"/>
        <end position="102"/>
    </location>
</feature>
<feature type="non-consecutive residues" evidence="5">
    <location>
        <begin position="120"/>
        <end position="121"/>
    </location>
</feature>
<feature type="non-consecutive residues" evidence="5">
    <location>
        <begin position="126"/>
        <end position="127"/>
    </location>
</feature>
<feature type="non-consecutive residues" evidence="5">
    <location>
        <begin position="146"/>
        <end position="147"/>
    </location>
</feature>
<feature type="non-consecutive residues" evidence="5">
    <location>
        <begin position="157"/>
        <end position="158"/>
    </location>
</feature>
<feature type="non-consecutive residues" evidence="5">
    <location>
        <begin position="170"/>
        <end position="171"/>
    </location>
</feature>
<feature type="non-consecutive residues" evidence="5">
    <location>
        <begin position="179"/>
        <end position="180"/>
    </location>
</feature>
<feature type="non-consecutive residues" evidence="5">
    <location>
        <begin position="196"/>
        <end position="197"/>
    </location>
</feature>
<feature type="non-consecutive residues" evidence="5">
    <location>
        <begin position="212"/>
        <end position="213"/>
    </location>
</feature>
<feature type="non-consecutive residues" evidence="5">
    <location>
        <begin position="225"/>
        <end position="226"/>
    </location>
</feature>
<feature type="non-consecutive residues" evidence="5">
    <location>
        <begin position="235"/>
        <end position="236"/>
    </location>
</feature>
<feature type="non-consecutive residues" evidence="5">
    <location>
        <begin position="252"/>
        <end position="253"/>
    </location>
</feature>
<feature type="non-consecutive residues" evidence="5">
    <location>
        <begin position="273"/>
        <end position="274"/>
    </location>
</feature>
<feature type="non-consecutive residues" evidence="5">
    <location>
        <begin position="281"/>
        <end position="282"/>
    </location>
</feature>
<feature type="non-consecutive residues" evidence="5">
    <location>
        <begin position="290"/>
        <end position="291"/>
    </location>
</feature>
<feature type="non-consecutive residues" evidence="5">
    <location>
        <begin position="304"/>
        <end position="305"/>
    </location>
</feature>
<feature type="non-consecutive residues" evidence="5">
    <location>
        <begin position="330"/>
        <end position="331"/>
    </location>
</feature>
<feature type="non-consecutive residues" evidence="5">
    <location>
        <begin position="338"/>
        <end position="339"/>
    </location>
</feature>
<feature type="non-consecutive residues" evidence="5">
    <location>
        <begin position="353"/>
        <end position="354"/>
    </location>
</feature>
<feature type="non-consecutive residues" evidence="5">
    <location>
        <begin position="359"/>
        <end position="360"/>
    </location>
</feature>
<feature type="non-consecutive residues" evidence="5">
    <location>
        <begin position="367"/>
        <end position="368"/>
    </location>
</feature>
<feature type="non-consecutive residues" evidence="5">
    <location>
        <begin position="379"/>
        <end position="380"/>
    </location>
</feature>
<feature type="non-consecutive residues" evidence="5">
    <location>
        <begin position="406"/>
        <end position="407"/>
    </location>
</feature>
<feature type="non-consecutive residues" evidence="5">
    <location>
        <begin position="420"/>
        <end position="421"/>
    </location>
</feature>
<feature type="non-consecutive residues" evidence="5">
    <location>
        <begin position="436"/>
        <end position="437"/>
    </location>
</feature>
<feature type="non-consecutive residues" evidence="5">
    <location>
        <begin position="452"/>
        <end position="453"/>
    </location>
</feature>
<feature type="non-consecutive residues" evidence="5">
    <location>
        <begin position="465"/>
        <end position="466"/>
    </location>
</feature>
<feature type="non-consecutive residues" evidence="5">
    <location>
        <begin position="481"/>
        <end position="482"/>
    </location>
</feature>
<feature type="non-consecutive residues" evidence="5">
    <location>
        <begin position="493"/>
        <end position="494"/>
    </location>
</feature>
<feature type="non-consecutive residues" evidence="5">
    <location>
        <begin position="507"/>
        <end position="508"/>
    </location>
</feature>
<feature type="non-consecutive residues" evidence="5">
    <location>
        <begin position="513"/>
        <end position="514"/>
    </location>
</feature>
<feature type="non-consecutive residues" evidence="5">
    <location>
        <begin position="522"/>
        <end position="523"/>
    </location>
</feature>
<feature type="non-consecutive residues" evidence="5">
    <location>
        <begin position="529"/>
        <end position="530"/>
    </location>
</feature>
<feature type="non-consecutive residues" evidence="5">
    <location>
        <begin position="541"/>
        <end position="542"/>
    </location>
</feature>
<feature type="non-consecutive residues" evidence="5">
    <location>
        <begin position="553"/>
        <end position="554"/>
    </location>
</feature>
<feature type="non-consecutive residues" evidence="5">
    <location>
        <begin position="573"/>
        <end position="574"/>
    </location>
</feature>
<feature type="non-consecutive residues" evidence="5">
    <location>
        <begin position="599"/>
        <end position="600"/>
    </location>
</feature>
<feature type="non-consecutive residues" evidence="5">
    <location>
        <begin position="610"/>
        <end position="611"/>
    </location>
</feature>
<feature type="non-consecutive residues" evidence="5">
    <location>
        <begin position="622"/>
        <end position="623"/>
    </location>
</feature>
<feature type="non-consecutive residues" evidence="5">
    <location>
        <begin position="649"/>
        <end position="650"/>
    </location>
</feature>
<feature type="non-consecutive residues" evidence="5">
    <location>
        <begin position="658"/>
        <end position="659"/>
    </location>
</feature>
<feature type="non-consecutive residues" evidence="5">
    <location>
        <begin position="668"/>
        <end position="669"/>
    </location>
</feature>
<feature type="non-consecutive residues" evidence="5">
    <location>
        <begin position="676"/>
        <end position="677"/>
    </location>
</feature>
<feature type="non-consecutive residues" evidence="5">
    <location>
        <begin position="686"/>
        <end position="687"/>
    </location>
</feature>
<feature type="non-consecutive residues" evidence="5">
    <location>
        <begin position="700"/>
        <end position="701"/>
    </location>
</feature>
<feature type="non-consecutive residues" evidence="5">
    <location>
        <begin position="711"/>
        <end position="712"/>
    </location>
</feature>
<feature type="non-consecutive residues" evidence="5">
    <location>
        <begin position="724"/>
        <end position="725"/>
    </location>
</feature>
<feature type="non-consecutive residues" evidence="5">
    <location>
        <begin position="733"/>
        <end position="734"/>
    </location>
</feature>
<feature type="non-consecutive residues" evidence="5">
    <location>
        <begin position="746"/>
        <end position="747"/>
    </location>
</feature>
<feature type="non-consecutive residues" evidence="5">
    <location>
        <begin position="757"/>
        <end position="758"/>
    </location>
</feature>
<feature type="non-consecutive residues" evidence="5">
    <location>
        <begin position="773"/>
        <end position="774"/>
    </location>
</feature>
<feature type="non-consecutive residues" evidence="5">
    <location>
        <begin position="782"/>
        <end position="783"/>
    </location>
</feature>
<feature type="non-consecutive residues" evidence="5">
    <location>
        <begin position="794"/>
        <end position="795"/>
    </location>
</feature>
<feature type="non-consecutive residues" evidence="5">
    <location>
        <begin position="807"/>
        <end position="808"/>
    </location>
</feature>
<feature type="non-consecutive residues" evidence="5">
    <location>
        <begin position="829"/>
        <end position="830"/>
    </location>
</feature>
<feature type="non-consecutive residues" evidence="5">
    <location>
        <begin position="843"/>
        <end position="844"/>
    </location>
</feature>
<feature type="non-consecutive residues" evidence="5">
    <location>
        <begin position="852"/>
        <end position="853"/>
    </location>
</feature>
<feature type="non-consecutive residues" evidence="5">
    <location>
        <begin position="884"/>
        <end position="885"/>
    </location>
</feature>
<feature type="non-terminal residue" evidence="5">
    <location>
        <position position="902"/>
    </location>
</feature>
<keyword id="KW-0004">4Fe-4S</keyword>
<keyword id="KW-1003">Cell membrane</keyword>
<keyword id="KW-0963">Cytoplasm</keyword>
<keyword id="KW-0903">Direct protein sequencing</keyword>
<keyword id="KW-0249">Electron transport</keyword>
<keyword id="KW-0408">Iron</keyword>
<keyword id="KW-0411">Iron-sulfur</keyword>
<keyword id="KW-0472">Membrane</keyword>
<keyword id="KW-0479">Metal-binding</keyword>
<keyword id="KW-0500">Molybdenum</keyword>
<keyword id="KW-0534">Nitrate assimilation</keyword>
<keyword id="KW-0560">Oxidoreductase</keyword>
<keyword id="KW-0813">Transport</keyword>
<organism>
    <name type="scientific">Bradyrhizobium sp</name>
    <dbReference type="NCBI Taxonomy" id="376"/>
    <lineage>
        <taxon>Bacteria</taxon>
        <taxon>Pseudomonadati</taxon>
        <taxon>Pseudomonadota</taxon>
        <taxon>Alphaproteobacteria</taxon>
        <taxon>Hyphomicrobiales</taxon>
        <taxon>Nitrobacteraceae</taxon>
        <taxon>Bradyrhizobium</taxon>
    </lineage>
</organism>
<dbReference type="EC" id="1.7.5.1"/>
<dbReference type="SMR" id="P85097"/>
<dbReference type="GO" id="GO:0005737">
    <property type="term" value="C:cytoplasm"/>
    <property type="evidence" value="ECO:0007669"/>
    <property type="project" value="UniProtKB-SubCell"/>
</dbReference>
<dbReference type="GO" id="GO:1990204">
    <property type="term" value="C:oxidoreductase complex"/>
    <property type="evidence" value="ECO:0007669"/>
    <property type="project" value="UniProtKB-ARBA"/>
</dbReference>
<dbReference type="GO" id="GO:0005886">
    <property type="term" value="C:plasma membrane"/>
    <property type="evidence" value="ECO:0007669"/>
    <property type="project" value="UniProtKB-SubCell"/>
</dbReference>
<dbReference type="GO" id="GO:0051539">
    <property type="term" value="F:4 iron, 4 sulfur cluster binding"/>
    <property type="evidence" value="ECO:0007669"/>
    <property type="project" value="UniProtKB-KW"/>
</dbReference>
<dbReference type="GO" id="GO:0046872">
    <property type="term" value="F:metal ion binding"/>
    <property type="evidence" value="ECO:0007669"/>
    <property type="project" value="UniProtKB-KW"/>
</dbReference>
<dbReference type="GO" id="GO:0043546">
    <property type="term" value="F:molybdopterin cofactor binding"/>
    <property type="evidence" value="ECO:0007669"/>
    <property type="project" value="InterPro"/>
</dbReference>
<dbReference type="GO" id="GO:0160182">
    <property type="term" value="F:nitrate reductase (quinone) activity"/>
    <property type="evidence" value="ECO:0007669"/>
    <property type="project" value="UniProtKB-EC"/>
</dbReference>
<dbReference type="GO" id="GO:0045333">
    <property type="term" value="P:cellular respiration"/>
    <property type="evidence" value="ECO:0007669"/>
    <property type="project" value="UniProtKB-ARBA"/>
</dbReference>
<dbReference type="GO" id="GO:0042128">
    <property type="term" value="P:nitrate assimilation"/>
    <property type="evidence" value="ECO:0007669"/>
    <property type="project" value="UniProtKB-KW"/>
</dbReference>
<dbReference type="Gene3D" id="3.40.50.12440">
    <property type="match status" value="4"/>
</dbReference>
<dbReference type="InterPro" id="IPR009010">
    <property type="entry name" value="Asp_de-COase-like_dom_sf"/>
</dbReference>
<dbReference type="InterPro" id="IPR006657">
    <property type="entry name" value="MoPterin_dinucl-bd_dom"/>
</dbReference>
<dbReference type="InterPro" id="IPR006656">
    <property type="entry name" value="Mopterin_OxRdtase"/>
</dbReference>
<dbReference type="InterPro" id="IPR006655">
    <property type="entry name" value="Mopterin_OxRdtase_prok_CS"/>
</dbReference>
<dbReference type="InterPro" id="IPR050123">
    <property type="entry name" value="Prok_molybdopt-oxidoreductase"/>
</dbReference>
<dbReference type="PANTHER" id="PTHR43105">
    <property type="entry name" value="RESPIRATORY NITRATE REDUCTASE"/>
    <property type="match status" value="1"/>
</dbReference>
<dbReference type="PANTHER" id="PTHR43105:SF2">
    <property type="entry name" value="RESPIRATORY NITRATE REDUCTASE 2 ALPHA CHAIN"/>
    <property type="match status" value="1"/>
</dbReference>
<dbReference type="Pfam" id="PF00384">
    <property type="entry name" value="Molybdopterin"/>
    <property type="match status" value="1"/>
</dbReference>
<dbReference type="Pfam" id="PF01568">
    <property type="entry name" value="Molydop_binding"/>
    <property type="match status" value="1"/>
</dbReference>
<dbReference type="SUPFAM" id="SSF50692">
    <property type="entry name" value="ADC-like"/>
    <property type="match status" value="1"/>
</dbReference>
<dbReference type="SUPFAM" id="SSF53706">
    <property type="entry name" value="Formate dehydrogenase/DMSO reductase, domains 1-3"/>
    <property type="match status" value="1"/>
</dbReference>
<dbReference type="PROSITE" id="PS00490">
    <property type="entry name" value="MOLYBDOPTERIN_PROK_2"/>
    <property type="match status" value="1"/>
</dbReference>
<name>NARG_BRASZ</name>
<gene>
    <name type="primary">narG</name>
</gene>
<sequence>FSPIDRYNDNHTQETYEDREWENVYRSTHGVNCTGSCSWKDGIVTWEGQELNYPTTGPDMPDFEPRGASYSWYLYSANRGVLWSMWQEELQNNESPLDAWKSSWQEVNELIAASNVYTVKTYGPDRVAGFSPIPAMSMVSYASGARTPDAHFFTEVRVVSVSPDFAESTKLCDLWLAPKQGTDAAMALAMGHVMLREFHLDNPSDYFLNYCRQYTDFPFLVTLSKQKGDQFVADRAADLVDALGQENNPEWKPVLWNENTNDFATPHGTMGSRGKWNLEQRLEDEETGEKLSVLGIEDEIGTVRLQLADGSTALVTTVYDLTMANYGLERGLGGQEPKDFNDDVPFTPAWQEKITGVPRELIIQIAREFADNADKTHGRAVLNLVLLVGAQGVNGGGWAHYVGQEKLRPAEGWQTIAMAKHMNSTSYFYNHSSQWRYETVTAQELLSPMADKYQHHGDYNVLAARMGWLPSAPQLGTNPLRQAGMSPVDYTVKFAAEQPENGKNHPRNLFVWRSNLLGSSGKGHEYMLKYLLGTENGIQGKQGGVKPEEVEWKLSSTCLYSDIVLPTATWYEKDDMNTSDMHPFIHPLSAAVDPAWESKSDWDIFTSLSKKFSEVCVGHLGKETDVVTLPIQHDSAAELAQPLDVKDWKGECEPIPGKTMPQIHVVERDYPATYERFTSIGPLMEKGIAWNTQSEMDLLRAWAALSEFTGRDHTHLALNKEDEKFRDIQAQPRTVITSPAFTGSEKQSFYLDHDMMKDFGESLLVYRPPIDTRKSRPEVEGKEITLNYLTPHNKGGPIVWISETDARDLGIEDNDWIEVFNSNGALTARVPAGMTMMYHAQERGGIHNSVTRPTHMIGGYAQLAYGFNYYGTVGSNRDEFVVVRNINWLDGEGNDQVQESVK</sequence>
<accession>P85097</accession>
<proteinExistence type="evidence at protein level"/>
<reference key="1">
    <citation type="submission" date="2007-02" db="UniProtKB">
        <title>Identification of membrane-bound respiratory nitrate reductase from Bradyrhizobium sp. (Lupinus) USDA 3045 by tandem mass spectrometry.</title>
        <authorList>
            <person name="Polcyn W."/>
        </authorList>
    </citation>
    <scope>PROTEIN SEQUENCE</scope>
    <scope>FUNCTION</scope>
    <scope>ACTIVITY REGULATION</scope>
    <scope>SUBUNIT</scope>
    <scope>SUBCELLULAR LOCATION</scope>
    <scope>INDUCTION</scope>
    <source>
        <strain evidence="4">USDA 3045</strain>
    </source>
</reference>
<protein>
    <recommendedName>
        <fullName>Respiratory nitrate reductase alpha chain</fullName>
        <ecNumber>1.7.5.1</ecNumber>
    </recommendedName>
    <alternativeName>
        <fullName>Respiratory membrane-bound nitrate reductase subunit alpha</fullName>
    </alternativeName>
</protein>
<comment type="function">
    <text evidence="2 4">The nitrate reductase enzyme complex allows Bradyrhizobium sp. USDA 3045 to use nitrate as an electron acceptor during anaerobic growth. The alpha chain is the actual site of nitrate reduction.</text>
</comment>
<comment type="catalytic activity">
    <reaction>
        <text>nitrate + a quinol = a quinone + nitrite + H2O</text>
        <dbReference type="Rhea" id="RHEA:56144"/>
        <dbReference type="ChEBI" id="CHEBI:15377"/>
        <dbReference type="ChEBI" id="CHEBI:16301"/>
        <dbReference type="ChEBI" id="CHEBI:17632"/>
        <dbReference type="ChEBI" id="CHEBI:24646"/>
        <dbReference type="ChEBI" id="CHEBI:132124"/>
        <dbReference type="EC" id="1.7.5.1"/>
    </reaction>
</comment>
<comment type="cofactor">
    <cofactor evidence="2">
        <name>[4Fe-4S] cluster</name>
        <dbReference type="ChEBI" id="CHEBI:49883"/>
    </cofactor>
    <text evidence="2">Binds 1 [4Fe-4S] cluster per subunit.</text>
</comment>
<comment type="cofactor">
    <cofactor evidence="1">
        <name>Mo-bis(molybdopterin guanine dinucleotide)</name>
        <dbReference type="ChEBI" id="CHEBI:60539"/>
    </cofactor>
    <text evidence="1">Binds 1 molybdenum-bis(molybdopterin guanine dinucleotide) (Mo-bis-MGD) cofactor per subunit.</text>
</comment>
<comment type="activity regulation">
    <text evidence="4">Inhibited by micromolar concentrations of azide.</text>
</comment>
<comment type="subunit">
    <text evidence="4">Heterotrimer composed of an alpha, a beta and a gamma chain. Alpha and beta are catalytic chains; gamma chains are involved in binding the enzyme complex to the cytoplasmic membrane.</text>
</comment>
<comment type="subcellular location">
    <subcellularLocation>
        <location evidence="4">Cell membrane</location>
    </subcellularLocation>
    <subcellularLocation>
        <location evidence="4">Cytoplasm</location>
    </subcellularLocation>
</comment>
<comment type="induction">
    <text evidence="4">Induced by anaerobiosis, there is no significant expression in an aerobic environment. Expression is further induced in the presence of nitrate or nitrite.</text>
</comment>
<comment type="similarity">
    <text evidence="3">Belongs to the prokaryotic molybdopterin-containing oxidoreductase family.</text>
</comment>